<dbReference type="EMBL" id="CP000890">
    <property type="protein sequence ID" value="ABX78293.1"/>
    <property type="molecule type" value="Genomic_DNA"/>
</dbReference>
<dbReference type="RefSeq" id="WP_010958062.1">
    <property type="nucleotide sequence ID" value="NC_010117.1"/>
</dbReference>
<dbReference type="SMR" id="A9NDR3"/>
<dbReference type="KEGG" id="cbs:COXBURSA331_A1342"/>
<dbReference type="HOGENOM" id="CLU_087560_0_0_6"/>
<dbReference type="GO" id="GO:0030288">
    <property type="term" value="C:outer membrane-bounded periplasmic space"/>
    <property type="evidence" value="ECO:0007669"/>
    <property type="project" value="TreeGrafter"/>
</dbReference>
<dbReference type="GO" id="GO:0044874">
    <property type="term" value="P:lipoprotein localization to outer membrane"/>
    <property type="evidence" value="ECO:0007669"/>
    <property type="project" value="UniProtKB-UniRule"/>
</dbReference>
<dbReference type="GO" id="GO:0042953">
    <property type="term" value="P:lipoprotein transport"/>
    <property type="evidence" value="ECO:0007669"/>
    <property type="project" value="InterPro"/>
</dbReference>
<dbReference type="CDD" id="cd16325">
    <property type="entry name" value="LolA"/>
    <property type="match status" value="1"/>
</dbReference>
<dbReference type="FunFam" id="2.50.20.10:FF:000015">
    <property type="entry name" value="Outer-membrane lipoprotein carrier protein"/>
    <property type="match status" value="1"/>
</dbReference>
<dbReference type="Gene3D" id="2.50.20.10">
    <property type="entry name" value="Lipoprotein localisation LolA/LolB/LppX"/>
    <property type="match status" value="1"/>
</dbReference>
<dbReference type="HAMAP" id="MF_00240">
    <property type="entry name" value="LolA"/>
    <property type="match status" value="1"/>
</dbReference>
<dbReference type="InterPro" id="IPR029046">
    <property type="entry name" value="LolA/LolB/LppX"/>
</dbReference>
<dbReference type="InterPro" id="IPR004564">
    <property type="entry name" value="OM_lipoprot_carrier_LolA-like"/>
</dbReference>
<dbReference type="InterPro" id="IPR018323">
    <property type="entry name" value="OM_lipoprot_carrier_LolA_Pbac"/>
</dbReference>
<dbReference type="NCBIfam" id="TIGR00547">
    <property type="entry name" value="lolA"/>
    <property type="match status" value="1"/>
</dbReference>
<dbReference type="PANTHER" id="PTHR35869">
    <property type="entry name" value="OUTER-MEMBRANE LIPOPROTEIN CARRIER PROTEIN"/>
    <property type="match status" value="1"/>
</dbReference>
<dbReference type="PANTHER" id="PTHR35869:SF1">
    <property type="entry name" value="OUTER-MEMBRANE LIPOPROTEIN CARRIER PROTEIN"/>
    <property type="match status" value="1"/>
</dbReference>
<dbReference type="Pfam" id="PF03548">
    <property type="entry name" value="LolA"/>
    <property type="match status" value="1"/>
</dbReference>
<dbReference type="SUPFAM" id="SSF89392">
    <property type="entry name" value="Prokaryotic lipoproteins and lipoprotein localization factors"/>
    <property type="match status" value="1"/>
</dbReference>
<evidence type="ECO:0000255" key="1">
    <source>
        <dbReference type="HAMAP-Rule" id="MF_00240"/>
    </source>
</evidence>
<gene>
    <name evidence="1" type="primary">lolA</name>
    <name type="ordered locus">COXBURSA331_A1342</name>
</gene>
<keyword id="KW-0143">Chaperone</keyword>
<keyword id="KW-0574">Periplasm</keyword>
<keyword id="KW-0653">Protein transport</keyword>
<keyword id="KW-0732">Signal</keyword>
<keyword id="KW-0813">Transport</keyword>
<organism>
    <name type="scientific">Coxiella burnetii (strain RSA 331 / Henzerling II)</name>
    <dbReference type="NCBI Taxonomy" id="360115"/>
    <lineage>
        <taxon>Bacteria</taxon>
        <taxon>Pseudomonadati</taxon>
        <taxon>Pseudomonadota</taxon>
        <taxon>Gammaproteobacteria</taxon>
        <taxon>Legionellales</taxon>
        <taxon>Coxiellaceae</taxon>
        <taxon>Coxiella</taxon>
    </lineage>
</organism>
<name>LOLA_COXBR</name>
<feature type="signal peptide" evidence="1">
    <location>
        <begin position="1"/>
        <end position="24"/>
    </location>
</feature>
<feature type="chain" id="PRO_1000078359" description="Outer-membrane lipoprotein carrier protein">
    <location>
        <begin position="25"/>
        <end position="211"/>
    </location>
</feature>
<reference key="1">
    <citation type="submission" date="2007-11" db="EMBL/GenBank/DDBJ databases">
        <title>Genome sequencing of phylogenetically and phenotypically diverse Coxiella burnetii isolates.</title>
        <authorList>
            <person name="Seshadri R."/>
            <person name="Samuel J.E."/>
        </authorList>
    </citation>
    <scope>NUCLEOTIDE SEQUENCE [LARGE SCALE GENOMIC DNA]</scope>
    <source>
        <strain>RSA 331 / Henzerling II</strain>
    </source>
</reference>
<comment type="function">
    <text evidence="1">Participates in the translocation of lipoproteins from the inner membrane to the outer membrane. Only forms a complex with a lipoprotein if the residue after the N-terminal Cys is not an aspartate (The Asp acts as a targeting signal to indicate that the lipoprotein should stay in the inner membrane).</text>
</comment>
<comment type="subunit">
    <text evidence="1">Monomer.</text>
</comment>
<comment type="subcellular location">
    <subcellularLocation>
        <location evidence="1">Periplasm</location>
    </subcellularLocation>
</comment>
<comment type="similarity">
    <text evidence="1">Belongs to the LolA family.</text>
</comment>
<proteinExistence type="inferred from homology"/>
<accession>A9NDR3</accession>
<sequence>MNTIKILIGLLGIFLFSLSGIVSAQSDATTQLSQLLSNFRTYQAKFNQITFDGQDRVIQQSHGRVMIMRPGRFRWETDSPTKQIIITNGKTLWVYDVDLSQATQQPLAQKTNINPASLLSGSVKDLKQKFTITISPTPDAATFQLVPNLGKSLNFNWIRLKFSKKQLTEMTVLNNLDERSIFQFSQIKVNAPLSSTLFEFKPSRGIDVVKQ</sequence>
<protein>
    <recommendedName>
        <fullName evidence="1">Outer-membrane lipoprotein carrier protein</fullName>
    </recommendedName>
</protein>